<dbReference type="EC" id="2.1.2.9" evidence="1"/>
<dbReference type="EMBL" id="CP001147">
    <property type="protein sequence ID" value="ACI21917.1"/>
    <property type="molecule type" value="Genomic_DNA"/>
</dbReference>
<dbReference type="RefSeq" id="WP_012546616.1">
    <property type="nucleotide sequence ID" value="NC_011296.1"/>
</dbReference>
<dbReference type="RefSeq" id="YP_002248175.1">
    <property type="nucleotide sequence ID" value="NC_011296.1"/>
</dbReference>
<dbReference type="SMR" id="B5YIL6"/>
<dbReference type="FunCoup" id="B5YIL6">
    <property type="interactions" value="409"/>
</dbReference>
<dbReference type="STRING" id="289376.THEYE_A0328"/>
<dbReference type="EnsemblBacteria" id="ACI21917">
    <property type="protein sequence ID" value="ACI21917"/>
    <property type="gene ID" value="THEYE_A0328"/>
</dbReference>
<dbReference type="KEGG" id="tye:THEYE_A0328"/>
<dbReference type="PATRIC" id="fig|289376.4.peg.321"/>
<dbReference type="eggNOG" id="COG0223">
    <property type="taxonomic scope" value="Bacteria"/>
</dbReference>
<dbReference type="HOGENOM" id="CLU_033347_1_1_0"/>
<dbReference type="InParanoid" id="B5YIL6"/>
<dbReference type="OrthoDB" id="9802815at2"/>
<dbReference type="Proteomes" id="UP000000718">
    <property type="component" value="Chromosome"/>
</dbReference>
<dbReference type="GO" id="GO:0005829">
    <property type="term" value="C:cytosol"/>
    <property type="evidence" value="ECO:0000318"/>
    <property type="project" value="GO_Central"/>
</dbReference>
<dbReference type="GO" id="GO:0004479">
    <property type="term" value="F:methionyl-tRNA formyltransferase activity"/>
    <property type="evidence" value="ECO:0000318"/>
    <property type="project" value="GO_Central"/>
</dbReference>
<dbReference type="GO" id="GO:0071951">
    <property type="term" value="P:conversion of methionyl-tRNA to N-formyl-methionyl-tRNA"/>
    <property type="evidence" value="ECO:0000318"/>
    <property type="project" value="GO_Central"/>
</dbReference>
<dbReference type="CDD" id="cd08646">
    <property type="entry name" value="FMT_core_Met-tRNA-FMT_N"/>
    <property type="match status" value="1"/>
</dbReference>
<dbReference type="CDD" id="cd08704">
    <property type="entry name" value="Met_tRNA_FMT_C"/>
    <property type="match status" value="1"/>
</dbReference>
<dbReference type="FunFam" id="3.40.50.12230:FF:000001">
    <property type="entry name" value="Methionyl-tRNA formyltransferase"/>
    <property type="match status" value="1"/>
</dbReference>
<dbReference type="Gene3D" id="3.40.50.12230">
    <property type="match status" value="1"/>
</dbReference>
<dbReference type="HAMAP" id="MF_00182">
    <property type="entry name" value="Formyl_trans"/>
    <property type="match status" value="1"/>
</dbReference>
<dbReference type="InterPro" id="IPR005794">
    <property type="entry name" value="Fmt"/>
</dbReference>
<dbReference type="InterPro" id="IPR005793">
    <property type="entry name" value="Formyl_trans_C"/>
</dbReference>
<dbReference type="InterPro" id="IPR002376">
    <property type="entry name" value="Formyl_transf_N"/>
</dbReference>
<dbReference type="InterPro" id="IPR036477">
    <property type="entry name" value="Formyl_transf_N_sf"/>
</dbReference>
<dbReference type="InterPro" id="IPR011034">
    <property type="entry name" value="Formyl_transferase-like_C_sf"/>
</dbReference>
<dbReference type="InterPro" id="IPR044135">
    <property type="entry name" value="Met-tRNA-FMT_C"/>
</dbReference>
<dbReference type="InterPro" id="IPR041711">
    <property type="entry name" value="Met-tRNA-FMT_N"/>
</dbReference>
<dbReference type="NCBIfam" id="TIGR00460">
    <property type="entry name" value="fmt"/>
    <property type="match status" value="1"/>
</dbReference>
<dbReference type="PANTHER" id="PTHR11138">
    <property type="entry name" value="METHIONYL-TRNA FORMYLTRANSFERASE"/>
    <property type="match status" value="1"/>
</dbReference>
<dbReference type="PANTHER" id="PTHR11138:SF5">
    <property type="entry name" value="METHIONYL-TRNA FORMYLTRANSFERASE, MITOCHONDRIAL"/>
    <property type="match status" value="1"/>
</dbReference>
<dbReference type="Pfam" id="PF02911">
    <property type="entry name" value="Formyl_trans_C"/>
    <property type="match status" value="1"/>
</dbReference>
<dbReference type="Pfam" id="PF00551">
    <property type="entry name" value="Formyl_trans_N"/>
    <property type="match status" value="1"/>
</dbReference>
<dbReference type="SUPFAM" id="SSF50486">
    <property type="entry name" value="FMT C-terminal domain-like"/>
    <property type="match status" value="1"/>
</dbReference>
<dbReference type="SUPFAM" id="SSF53328">
    <property type="entry name" value="Formyltransferase"/>
    <property type="match status" value="1"/>
</dbReference>
<name>FMT_THEYD</name>
<organism>
    <name type="scientific">Thermodesulfovibrio yellowstonii (strain ATCC 51303 / DSM 11347 / YP87)</name>
    <dbReference type="NCBI Taxonomy" id="289376"/>
    <lineage>
        <taxon>Bacteria</taxon>
        <taxon>Pseudomonadati</taxon>
        <taxon>Nitrospirota</taxon>
        <taxon>Thermodesulfovibrionia</taxon>
        <taxon>Thermodesulfovibrionales</taxon>
        <taxon>Thermodesulfovibrionaceae</taxon>
        <taxon>Thermodesulfovibrio</taxon>
    </lineage>
</organism>
<protein>
    <recommendedName>
        <fullName evidence="1">Methionyl-tRNA formyltransferase</fullName>
        <ecNumber evidence="1">2.1.2.9</ecNumber>
    </recommendedName>
</protein>
<accession>B5YIL6</accession>
<proteinExistence type="inferred from homology"/>
<sequence length="308" mass="33993">MSSGIIFFGTPEFAVPSLKALISRGEKILLVVTQPDKPKGRGKNLQAPEIKKVALQCGLPLCQPEKMKDDNFIKKLKSLNPEFAIVVAYGKILPKEILEIPKHGCINLHASLLPKYRGAAPIQWALINGEKITGVTTMIIDEGLDTGPILLQKEISINDEDNAETLSEKLSVVGAELIIETIDKMRKGIITPKPQTGEITYAPQLKKDDGKINWNNSARKIFNLVRGTYPWPCAYSFLKDERVKIIKTEVLEGNAAPGLIIKAKNELIVGTQEGLLRILLIQPEGKKIMTAKEFISGRKINEGMDSFS</sequence>
<comment type="function">
    <text evidence="1">Attaches a formyl group to the free amino group of methionyl-tRNA(fMet). The formyl group appears to play a dual role in the initiator identity of N-formylmethionyl-tRNA by promoting its recognition by IF2 and preventing the misappropriation of this tRNA by the elongation apparatus.</text>
</comment>
<comment type="catalytic activity">
    <reaction evidence="1">
        <text>L-methionyl-tRNA(fMet) + (6R)-10-formyltetrahydrofolate = N-formyl-L-methionyl-tRNA(fMet) + (6S)-5,6,7,8-tetrahydrofolate + H(+)</text>
        <dbReference type="Rhea" id="RHEA:24380"/>
        <dbReference type="Rhea" id="RHEA-COMP:9952"/>
        <dbReference type="Rhea" id="RHEA-COMP:9953"/>
        <dbReference type="ChEBI" id="CHEBI:15378"/>
        <dbReference type="ChEBI" id="CHEBI:57453"/>
        <dbReference type="ChEBI" id="CHEBI:78530"/>
        <dbReference type="ChEBI" id="CHEBI:78844"/>
        <dbReference type="ChEBI" id="CHEBI:195366"/>
        <dbReference type="EC" id="2.1.2.9"/>
    </reaction>
</comment>
<comment type="similarity">
    <text evidence="1">Belongs to the Fmt family.</text>
</comment>
<reference key="1">
    <citation type="submission" date="2008-08" db="EMBL/GenBank/DDBJ databases">
        <title>The complete genome sequence of Thermodesulfovibrio yellowstonii strain ATCC 51303 / DSM 11347 / YP87.</title>
        <authorList>
            <person name="Dodson R.J."/>
            <person name="Durkin A.S."/>
            <person name="Wu M."/>
            <person name="Eisen J."/>
            <person name="Sutton G."/>
        </authorList>
    </citation>
    <scope>NUCLEOTIDE SEQUENCE [LARGE SCALE GENOMIC DNA]</scope>
    <source>
        <strain>ATCC 51303 / DSM 11347 / YP87</strain>
    </source>
</reference>
<evidence type="ECO:0000255" key="1">
    <source>
        <dbReference type="HAMAP-Rule" id="MF_00182"/>
    </source>
</evidence>
<gene>
    <name evidence="1" type="primary">fmt</name>
    <name type="ordered locus">THEYE_A0328</name>
</gene>
<keyword id="KW-0648">Protein biosynthesis</keyword>
<keyword id="KW-1185">Reference proteome</keyword>
<keyword id="KW-0808">Transferase</keyword>
<feature type="chain" id="PRO_1000098455" description="Methionyl-tRNA formyltransferase">
    <location>
        <begin position="1"/>
        <end position="308"/>
    </location>
</feature>
<feature type="binding site" evidence="1">
    <location>
        <begin position="111"/>
        <end position="114"/>
    </location>
    <ligand>
        <name>(6S)-5,6,7,8-tetrahydrofolate</name>
        <dbReference type="ChEBI" id="CHEBI:57453"/>
    </ligand>
</feature>